<gene>
    <name type="primary">Bcl2l15</name>
    <name type="synonym">Gm566</name>
</gene>
<feature type="chain" id="PRO_0000283004" description="Bcl-2-like protein 15">
    <location>
        <begin position="1"/>
        <end position="167"/>
    </location>
</feature>
<feature type="sequence conflict" description="In Ref. 1; AAI28506." evidence="1" ref="1">
    <original>Q</original>
    <variation>R</variation>
    <location>
        <position position="137"/>
    </location>
</feature>
<evidence type="ECO:0000305" key="1"/>
<sequence length="167" mass="18300">MSKMKNPRTFEEQTECIVNSLLKDFRTPLSHAANRNLSGADEPCSGEDYSFDVAIIVGRLRILGDQFNGELEASANNIIAVTIGGQAGSTVLNDTVQSLSRTWCTQDPTLVFERAFLAVSVKLLEYVVRKAPNVARQVANYVTGMINGNTAIREFIQGQGGWENLES</sequence>
<name>B2L15_MOUSE</name>
<protein>
    <recommendedName>
        <fullName>Bcl-2-like protein 15</fullName>
        <shortName>Bcl2-L-15</shortName>
    </recommendedName>
    <alternativeName>
        <fullName>Bcl-2 family kin</fullName>
        <shortName>Bfk</shortName>
    </alternativeName>
</protein>
<dbReference type="EMBL" id="AC124698">
    <property type="status" value="NOT_ANNOTATED_CDS"/>
    <property type="molecule type" value="Genomic_DNA"/>
</dbReference>
<dbReference type="EMBL" id="CH466608">
    <property type="protein sequence ID" value="EDL07582.1"/>
    <property type="molecule type" value="Genomic_DNA"/>
</dbReference>
<dbReference type="EMBL" id="BC117780">
    <property type="protein sequence ID" value="AAI17781.1"/>
    <property type="status" value="ALT_INIT"/>
    <property type="molecule type" value="mRNA"/>
</dbReference>
<dbReference type="EMBL" id="BC117781">
    <property type="protein sequence ID" value="AAI17782.1"/>
    <property type="status" value="ALT_INIT"/>
    <property type="molecule type" value="mRNA"/>
</dbReference>
<dbReference type="EMBL" id="BC027668">
    <property type="protein sequence ID" value="AAH27668.1"/>
    <property type="status" value="ALT_INIT"/>
    <property type="molecule type" value="mRNA"/>
</dbReference>
<dbReference type="EMBL" id="BC128505">
    <property type="protein sequence ID" value="AAI28506.1"/>
    <property type="status" value="ALT_INIT"/>
    <property type="molecule type" value="mRNA"/>
</dbReference>
<dbReference type="EMBL" id="BC128506">
    <property type="protein sequence ID" value="AAI28507.1"/>
    <property type="status" value="ALT_INIT"/>
    <property type="molecule type" value="mRNA"/>
</dbReference>
<dbReference type="CCDS" id="CCDS51027.1"/>
<dbReference type="RefSeq" id="NP_001136431.1">
    <property type="nucleotide sequence ID" value="NM_001142959.1"/>
</dbReference>
<dbReference type="RefSeq" id="NP_001136432.1">
    <property type="nucleotide sequence ID" value="NM_001142960.1"/>
</dbReference>
<dbReference type="SMR" id="Q08ED0"/>
<dbReference type="FunCoup" id="Q08ED0">
    <property type="interactions" value="1039"/>
</dbReference>
<dbReference type="STRING" id="10090.ENSMUSP00000052210"/>
<dbReference type="PhosphoSitePlus" id="Q08ED0"/>
<dbReference type="PaxDb" id="10090-ENSMUSP00000052210"/>
<dbReference type="ProteomicsDB" id="273515"/>
<dbReference type="Antibodypedia" id="33849">
    <property type="antibodies" value="144 antibodies from 25 providers"/>
</dbReference>
<dbReference type="DNASU" id="229672"/>
<dbReference type="Ensembl" id="ENSMUST00000062945.12">
    <property type="protein sequence ID" value="ENSMUSP00000052210.6"/>
    <property type="gene ID" value="ENSMUSG00000044165.13"/>
</dbReference>
<dbReference type="GeneID" id="229672"/>
<dbReference type="KEGG" id="mmu:229672"/>
<dbReference type="UCSC" id="uc008qts.1">
    <property type="organism name" value="mouse"/>
</dbReference>
<dbReference type="AGR" id="MGI:2685412"/>
<dbReference type="CTD" id="440603"/>
<dbReference type="MGI" id="MGI:2685412">
    <property type="gene designation" value="Bcl2l15"/>
</dbReference>
<dbReference type="VEuPathDB" id="HostDB:ENSMUSG00000044165"/>
<dbReference type="eggNOG" id="ENOG502SB5V">
    <property type="taxonomic scope" value="Eukaryota"/>
</dbReference>
<dbReference type="GeneTree" id="ENSGT00390000018096"/>
<dbReference type="HOGENOM" id="CLU_1626530_0_0_1"/>
<dbReference type="InParanoid" id="Q08ED0"/>
<dbReference type="OMA" id="QVAISMT"/>
<dbReference type="OrthoDB" id="9950208at2759"/>
<dbReference type="PhylomeDB" id="Q08ED0"/>
<dbReference type="TreeFam" id="TF338066"/>
<dbReference type="BioGRID-ORCS" id="229672">
    <property type="hits" value="4 hits in 78 CRISPR screens"/>
</dbReference>
<dbReference type="PRO" id="PR:Q08ED0"/>
<dbReference type="Proteomes" id="UP000000589">
    <property type="component" value="Chromosome 3"/>
</dbReference>
<dbReference type="RNAct" id="Q08ED0">
    <property type="molecule type" value="protein"/>
</dbReference>
<dbReference type="Bgee" id="ENSMUSG00000044165">
    <property type="expression patterns" value="Expressed in ileum and 57 other cell types or tissues"/>
</dbReference>
<dbReference type="ExpressionAtlas" id="Q08ED0">
    <property type="expression patterns" value="baseline and differential"/>
</dbReference>
<dbReference type="GO" id="GO:0005829">
    <property type="term" value="C:cytosol"/>
    <property type="evidence" value="ECO:0000314"/>
    <property type="project" value="MGI"/>
</dbReference>
<dbReference type="GO" id="GO:0005634">
    <property type="term" value="C:nucleus"/>
    <property type="evidence" value="ECO:0000314"/>
    <property type="project" value="MGI"/>
</dbReference>
<dbReference type="GO" id="GO:0042981">
    <property type="term" value="P:regulation of apoptotic process"/>
    <property type="evidence" value="ECO:0007669"/>
    <property type="project" value="InterPro"/>
</dbReference>
<dbReference type="FunFam" id="1.10.437.10:FF:000018">
    <property type="entry name" value="BCL2 like 15"/>
    <property type="match status" value="1"/>
</dbReference>
<dbReference type="Gene3D" id="1.10.437.10">
    <property type="entry name" value="Blc2-like"/>
    <property type="match status" value="1"/>
</dbReference>
<dbReference type="InterPro" id="IPR036834">
    <property type="entry name" value="Bcl-2-like_sf"/>
</dbReference>
<dbReference type="InterPro" id="IPR033543">
    <property type="entry name" value="BCL2L15"/>
</dbReference>
<dbReference type="PANTHER" id="PTHR36466">
    <property type="entry name" value="BCL-2-LIKE PROTEIN 15"/>
    <property type="match status" value="1"/>
</dbReference>
<dbReference type="PANTHER" id="PTHR36466:SF1">
    <property type="entry name" value="BCL-2-LIKE PROTEIN 15"/>
    <property type="match status" value="1"/>
</dbReference>
<dbReference type="SUPFAM" id="SSF56854">
    <property type="entry name" value="Bcl-2 inhibitors of programmed cell death"/>
    <property type="match status" value="1"/>
</dbReference>
<accession>Q08ED0</accession>
<accession>A1A5A5</accession>
<accession>B0V3P5</accession>
<accession>Q8K186</accession>
<comment type="sequence caution" evidence="1">
    <conflict type="erroneous initiation">
        <sequence resource="EMBL-CDS" id="AAH27668"/>
    </conflict>
    <text>Truncated N-terminus.</text>
</comment>
<comment type="sequence caution" evidence="1">
    <conflict type="erroneous initiation">
        <sequence resource="EMBL-CDS" id="AAI17781"/>
    </conflict>
    <text>Truncated N-terminus.</text>
</comment>
<comment type="sequence caution" evidence="1">
    <conflict type="erroneous initiation">
        <sequence resource="EMBL-CDS" id="AAI17782"/>
    </conflict>
    <text>Truncated N-terminus.</text>
</comment>
<comment type="sequence caution" evidence="1">
    <conflict type="erroneous initiation">
        <sequence resource="EMBL-CDS" id="AAI28506"/>
    </conflict>
    <text>Truncated N-terminus.</text>
</comment>
<comment type="sequence caution" evidence="1">
    <conflict type="erroneous initiation">
        <sequence resource="EMBL-CDS" id="AAI28507"/>
    </conflict>
    <text>Truncated N-terminus.</text>
</comment>
<proteinExistence type="evidence at transcript level"/>
<reference key="1">
    <citation type="journal article" date="2009" name="PLoS Biol.">
        <title>Lineage-specific biology revealed by a finished genome assembly of the mouse.</title>
        <authorList>
            <person name="Church D.M."/>
            <person name="Goodstadt L."/>
            <person name="Hillier L.W."/>
            <person name="Zody M.C."/>
            <person name="Goldstein S."/>
            <person name="She X."/>
            <person name="Bult C.J."/>
            <person name="Agarwala R."/>
            <person name="Cherry J.L."/>
            <person name="DiCuccio M."/>
            <person name="Hlavina W."/>
            <person name="Kapustin Y."/>
            <person name="Meric P."/>
            <person name="Maglott D."/>
            <person name="Birtle Z."/>
            <person name="Marques A.C."/>
            <person name="Graves T."/>
            <person name="Zhou S."/>
            <person name="Teague B."/>
            <person name="Potamousis K."/>
            <person name="Churas C."/>
            <person name="Place M."/>
            <person name="Herschleb J."/>
            <person name="Runnheim R."/>
            <person name="Forrest D."/>
            <person name="Amos-Landgraf J."/>
            <person name="Schwartz D.C."/>
            <person name="Cheng Z."/>
            <person name="Lindblad-Toh K."/>
            <person name="Eichler E.E."/>
            <person name="Ponting C.P."/>
        </authorList>
    </citation>
    <scope>NUCLEOTIDE SEQUENCE [LARGE SCALE GENOMIC DNA]</scope>
    <source>
        <strain>C57BL/6J</strain>
    </source>
</reference>
<reference key="2">
    <citation type="submission" date="2005-07" db="EMBL/GenBank/DDBJ databases">
        <authorList>
            <person name="Mural R.J."/>
            <person name="Adams M.D."/>
            <person name="Myers E.W."/>
            <person name="Smith H.O."/>
            <person name="Venter J.C."/>
        </authorList>
    </citation>
    <scope>NUCLEOTIDE SEQUENCE [LARGE SCALE GENOMIC DNA]</scope>
</reference>
<reference key="3">
    <citation type="journal article" date="2004" name="Genome Res.">
        <title>The status, quality, and expansion of the NIH full-length cDNA project: the Mammalian Gene Collection (MGC).</title>
        <authorList>
            <consortium name="The MGC Project Team"/>
        </authorList>
    </citation>
    <scope>NUCLEOTIDE SEQUENCE [LARGE SCALE MRNA]</scope>
    <source>
        <tissue>Mammary gland</tissue>
    </source>
</reference>
<organism>
    <name type="scientific">Mus musculus</name>
    <name type="common">Mouse</name>
    <dbReference type="NCBI Taxonomy" id="10090"/>
    <lineage>
        <taxon>Eukaryota</taxon>
        <taxon>Metazoa</taxon>
        <taxon>Chordata</taxon>
        <taxon>Craniata</taxon>
        <taxon>Vertebrata</taxon>
        <taxon>Euteleostomi</taxon>
        <taxon>Mammalia</taxon>
        <taxon>Eutheria</taxon>
        <taxon>Euarchontoglires</taxon>
        <taxon>Glires</taxon>
        <taxon>Rodentia</taxon>
        <taxon>Myomorpha</taxon>
        <taxon>Muroidea</taxon>
        <taxon>Muridae</taxon>
        <taxon>Murinae</taxon>
        <taxon>Mus</taxon>
        <taxon>Mus</taxon>
    </lineage>
</organism>
<keyword id="KW-1185">Reference proteome</keyword>